<evidence type="ECO:0000250" key="1">
    <source>
        <dbReference type="UniProtKB" id="P10906"/>
    </source>
</evidence>
<evidence type="ECO:0000255" key="2"/>
<evidence type="ECO:0000255" key="3">
    <source>
        <dbReference type="PROSITE-ProRule" id="PRU00441"/>
    </source>
</evidence>
<evidence type="ECO:0000305" key="4"/>
<protein>
    <recommendedName>
        <fullName evidence="1">sn-glycerol-3-phosphate transport system permease protein UgpE</fullName>
    </recommendedName>
</protein>
<feature type="chain" id="PRO_0000292685" description="sn-glycerol-3-phosphate transport system permease protein UgpE">
    <location>
        <begin position="1"/>
        <end position="281"/>
    </location>
</feature>
<feature type="transmembrane region" description="Helical" evidence="3">
    <location>
        <begin position="16"/>
        <end position="36"/>
    </location>
</feature>
<feature type="transmembrane region" description="Helical" evidence="3">
    <location>
        <begin position="85"/>
        <end position="105"/>
    </location>
</feature>
<feature type="transmembrane region" description="Helical" evidence="3">
    <location>
        <begin position="113"/>
        <end position="133"/>
    </location>
</feature>
<feature type="transmembrane region" description="Helical" evidence="3">
    <location>
        <begin position="142"/>
        <end position="162"/>
    </location>
</feature>
<feature type="transmembrane region" description="Helical" evidence="3">
    <location>
        <begin position="202"/>
        <end position="222"/>
    </location>
</feature>
<feature type="transmembrane region" description="Helical" evidence="3">
    <location>
        <begin position="247"/>
        <end position="267"/>
    </location>
</feature>
<feature type="domain" description="ABC transmembrane type-1" evidence="3">
    <location>
        <begin position="77"/>
        <end position="268"/>
    </location>
</feature>
<organism>
    <name type="scientific">Shigella dysenteriae serotype 1 (strain Sd197)</name>
    <dbReference type="NCBI Taxonomy" id="300267"/>
    <lineage>
        <taxon>Bacteria</taxon>
        <taxon>Pseudomonadati</taxon>
        <taxon>Pseudomonadota</taxon>
        <taxon>Gammaproteobacteria</taxon>
        <taxon>Enterobacterales</taxon>
        <taxon>Enterobacteriaceae</taxon>
        <taxon>Shigella</taxon>
    </lineage>
</organism>
<sequence length="281" mass="31484">MIENRPWLTIFSHTMLILGIAVILFPLYVAFVAATLDKQAVYAAPMTLIPGTHLLENIHNIWVNGVGTNSAPFWRMLLNSFVMAFSITLGKITVSMLSAFAIVWFRFPLRNLFFWMIFITLMLPVEVRIFPTVEVIANLKMLDSYAGLTLPLMASATATFLFRQFFMILPDELVEAARIDGASPMRFFCDIVFPLSKTNLAALFVITFIYGWNQYLWPLLIITDVDLGTTVAGIKGMIATGEGTTEWNSVMAAMLLTLIPPVVIVLVMQRAFVRGLVDSEK</sequence>
<accession>Q32AT5</accession>
<reference key="1">
    <citation type="journal article" date="2005" name="Nucleic Acids Res.">
        <title>Genome dynamics and diversity of Shigella species, the etiologic agents of bacillary dysentery.</title>
        <authorList>
            <person name="Yang F."/>
            <person name="Yang J."/>
            <person name="Zhang X."/>
            <person name="Chen L."/>
            <person name="Jiang Y."/>
            <person name="Yan Y."/>
            <person name="Tang X."/>
            <person name="Wang J."/>
            <person name="Xiong Z."/>
            <person name="Dong J."/>
            <person name="Xue Y."/>
            <person name="Zhu Y."/>
            <person name="Xu X."/>
            <person name="Sun L."/>
            <person name="Chen S."/>
            <person name="Nie H."/>
            <person name="Peng J."/>
            <person name="Xu J."/>
            <person name="Wang Y."/>
            <person name="Yuan Z."/>
            <person name="Wen Y."/>
            <person name="Yao Z."/>
            <person name="Shen Y."/>
            <person name="Qiang B."/>
            <person name="Hou Y."/>
            <person name="Yu J."/>
            <person name="Jin Q."/>
        </authorList>
    </citation>
    <scope>NUCLEOTIDE SEQUENCE [LARGE SCALE GENOMIC DNA]</scope>
    <source>
        <strain>Sd197</strain>
    </source>
</reference>
<name>UGPE_SHIDS</name>
<dbReference type="EMBL" id="CP000034">
    <property type="protein sequence ID" value="ABB63570.1"/>
    <property type="molecule type" value="Genomic_DNA"/>
</dbReference>
<dbReference type="RefSeq" id="WP_000572161.1">
    <property type="nucleotide sequence ID" value="NC_007606.1"/>
</dbReference>
<dbReference type="RefSeq" id="YP_405061.1">
    <property type="nucleotide sequence ID" value="NC_007606.1"/>
</dbReference>
<dbReference type="SMR" id="Q32AT5"/>
<dbReference type="STRING" id="300267.SDY_3599"/>
<dbReference type="EnsemblBacteria" id="ABB63570">
    <property type="protein sequence ID" value="ABB63570"/>
    <property type="gene ID" value="SDY_3599"/>
</dbReference>
<dbReference type="KEGG" id="sdy:SDY_3599"/>
<dbReference type="PATRIC" id="fig|300267.13.peg.4274"/>
<dbReference type="HOGENOM" id="CLU_016047_1_1_6"/>
<dbReference type="Proteomes" id="UP000002716">
    <property type="component" value="Chromosome"/>
</dbReference>
<dbReference type="GO" id="GO:0005886">
    <property type="term" value="C:plasma membrane"/>
    <property type="evidence" value="ECO:0007669"/>
    <property type="project" value="UniProtKB-SubCell"/>
</dbReference>
<dbReference type="GO" id="GO:0055085">
    <property type="term" value="P:transmembrane transport"/>
    <property type="evidence" value="ECO:0007669"/>
    <property type="project" value="InterPro"/>
</dbReference>
<dbReference type="CDD" id="cd06261">
    <property type="entry name" value="TM_PBP2"/>
    <property type="match status" value="1"/>
</dbReference>
<dbReference type="FunFam" id="1.10.3720.10:FF:000042">
    <property type="entry name" value="sn-glycerol-3-phosphate transport system permease protein UgpE"/>
    <property type="match status" value="1"/>
</dbReference>
<dbReference type="Gene3D" id="1.10.3720.10">
    <property type="entry name" value="MetI-like"/>
    <property type="match status" value="1"/>
</dbReference>
<dbReference type="InterPro" id="IPR000515">
    <property type="entry name" value="MetI-like"/>
</dbReference>
<dbReference type="InterPro" id="IPR035906">
    <property type="entry name" value="MetI-like_sf"/>
</dbReference>
<dbReference type="NCBIfam" id="NF008210">
    <property type="entry name" value="PRK10973.1"/>
    <property type="match status" value="1"/>
</dbReference>
<dbReference type="PANTHER" id="PTHR43744">
    <property type="entry name" value="ABC TRANSPORTER PERMEASE PROTEIN MG189-RELATED-RELATED"/>
    <property type="match status" value="1"/>
</dbReference>
<dbReference type="PANTHER" id="PTHR43744:SF8">
    <property type="entry name" value="SN-GLYCEROL-3-PHOSPHATE TRANSPORT SYSTEM PERMEASE PROTEIN UGPE"/>
    <property type="match status" value="1"/>
</dbReference>
<dbReference type="Pfam" id="PF00528">
    <property type="entry name" value="BPD_transp_1"/>
    <property type="match status" value="1"/>
</dbReference>
<dbReference type="SUPFAM" id="SSF161098">
    <property type="entry name" value="MetI-like"/>
    <property type="match status" value="1"/>
</dbReference>
<dbReference type="PROSITE" id="PS50928">
    <property type="entry name" value="ABC_TM1"/>
    <property type="match status" value="1"/>
</dbReference>
<gene>
    <name type="primary">ugpE</name>
    <name type="ordered locus">SDY_3599</name>
</gene>
<proteinExistence type="inferred from homology"/>
<comment type="function">
    <text evidence="1">Part of the ABC transporter complex UgpBAEC involved in sn-glycerol-3-phosphate (G3P) import. Probably responsible for the translocation of the substrate across the membrane.</text>
</comment>
<comment type="subunit">
    <text evidence="1">The complex is composed of two ATP-binding proteins (UgpC), two transmembrane proteins (UgpA and UgpE) and a solute-binding protein (UgpB).</text>
</comment>
<comment type="subcellular location">
    <subcellularLocation>
        <location evidence="1">Cell inner membrane</location>
        <topology evidence="2">Multi-pass membrane protein</topology>
    </subcellularLocation>
</comment>
<comment type="similarity">
    <text evidence="4">Belongs to the binding-protein-dependent transport system permease family. UgpAE subfamily.</text>
</comment>
<keyword id="KW-0997">Cell inner membrane</keyword>
<keyword id="KW-1003">Cell membrane</keyword>
<keyword id="KW-0472">Membrane</keyword>
<keyword id="KW-1185">Reference proteome</keyword>
<keyword id="KW-0812">Transmembrane</keyword>
<keyword id="KW-1133">Transmembrane helix</keyword>
<keyword id="KW-0813">Transport</keyword>